<sequence length="190" mass="20657">MSGDNQLGRLVILAGPSAVGKSTVVDRLRNDVPNLYFSVSMTTRAPRPGEVDGRDYFYVTAQEFQDKIDCGEMLEWADIHGGLQRSGTPAGPVNEARQNGRPVLVEVDLAGARNIASLIPDAETIFLAPPSWEVLVERLTGRGTESEDVIARRLETAREELAAQSEFKHVIINDDVDTAVKAIEDVLLGA</sequence>
<keyword id="KW-0067">ATP-binding</keyword>
<keyword id="KW-0963">Cytoplasm</keyword>
<keyword id="KW-0418">Kinase</keyword>
<keyword id="KW-0547">Nucleotide-binding</keyword>
<keyword id="KW-1185">Reference proteome</keyword>
<keyword id="KW-0808">Transferase</keyword>
<name>KGUA_CORGL</name>
<dbReference type="EC" id="2.7.4.8" evidence="1"/>
<dbReference type="EMBL" id="AB083048">
    <property type="protein sequence ID" value="BAB88664.1"/>
    <property type="status" value="ALT_INIT"/>
    <property type="molecule type" value="Genomic_DNA"/>
</dbReference>
<dbReference type="EMBL" id="BA000036">
    <property type="protein sequence ID" value="BAB98999.1"/>
    <property type="status" value="ALT_INIT"/>
    <property type="molecule type" value="Genomic_DNA"/>
</dbReference>
<dbReference type="EMBL" id="BX927152">
    <property type="protein sequence ID" value="CAF21615.1"/>
    <property type="molecule type" value="Genomic_DNA"/>
</dbReference>
<dbReference type="RefSeq" id="NP_600820.2">
    <property type="nucleotide sequence ID" value="NC_003450.3"/>
</dbReference>
<dbReference type="RefSeq" id="WP_003855988.1">
    <property type="nucleotide sequence ID" value="NC_006958.1"/>
</dbReference>
<dbReference type="SMR" id="Q8NQ42"/>
<dbReference type="STRING" id="196627.cg1810"/>
<dbReference type="GeneID" id="1019574"/>
<dbReference type="KEGG" id="cgb:cg1810"/>
<dbReference type="KEGG" id="cgl:Cgl1606"/>
<dbReference type="PATRIC" id="fig|196627.13.peg.1568"/>
<dbReference type="eggNOG" id="COG0194">
    <property type="taxonomic scope" value="Bacteria"/>
</dbReference>
<dbReference type="HOGENOM" id="CLU_001715_1_1_11"/>
<dbReference type="OrthoDB" id="9808150at2"/>
<dbReference type="BioCyc" id="CORYNE:G18NG-11191-MONOMER"/>
<dbReference type="Proteomes" id="UP000000582">
    <property type="component" value="Chromosome"/>
</dbReference>
<dbReference type="Proteomes" id="UP000001009">
    <property type="component" value="Chromosome"/>
</dbReference>
<dbReference type="GO" id="GO:0005829">
    <property type="term" value="C:cytosol"/>
    <property type="evidence" value="ECO:0007669"/>
    <property type="project" value="TreeGrafter"/>
</dbReference>
<dbReference type="GO" id="GO:0005524">
    <property type="term" value="F:ATP binding"/>
    <property type="evidence" value="ECO:0007669"/>
    <property type="project" value="UniProtKB-UniRule"/>
</dbReference>
<dbReference type="GO" id="GO:0004385">
    <property type="term" value="F:guanylate kinase activity"/>
    <property type="evidence" value="ECO:0007669"/>
    <property type="project" value="UniProtKB-UniRule"/>
</dbReference>
<dbReference type="CDD" id="cd00071">
    <property type="entry name" value="GMPK"/>
    <property type="match status" value="1"/>
</dbReference>
<dbReference type="FunFam" id="3.30.63.10:FF:000002">
    <property type="entry name" value="Guanylate kinase 1"/>
    <property type="match status" value="1"/>
</dbReference>
<dbReference type="Gene3D" id="3.30.63.10">
    <property type="entry name" value="Guanylate Kinase phosphate binding domain"/>
    <property type="match status" value="1"/>
</dbReference>
<dbReference type="Gene3D" id="3.40.50.300">
    <property type="entry name" value="P-loop containing nucleotide triphosphate hydrolases"/>
    <property type="match status" value="1"/>
</dbReference>
<dbReference type="HAMAP" id="MF_00328">
    <property type="entry name" value="Guanylate_kinase"/>
    <property type="match status" value="1"/>
</dbReference>
<dbReference type="InterPro" id="IPR008145">
    <property type="entry name" value="GK/Ca_channel_bsu"/>
</dbReference>
<dbReference type="InterPro" id="IPR008144">
    <property type="entry name" value="Guanylate_kin-like_dom"/>
</dbReference>
<dbReference type="InterPro" id="IPR017665">
    <property type="entry name" value="Guanylate_kinase"/>
</dbReference>
<dbReference type="InterPro" id="IPR020590">
    <property type="entry name" value="Guanylate_kinase_CS"/>
</dbReference>
<dbReference type="InterPro" id="IPR027417">
    <property type="entry name" value="P-loop_NTPase"/>
</dbReference>
<dbReference type="NCBIfam" id="TIGR03263">
    <property type="entry name" value="guanyl_kin"/>
    <property type="match status" value="1"/>
</dbReference>
<dbReference type="PANTHER" id="PTHR23117:SF13">
    <property type="entry name" value="GUANYLATE KINASE"/>
    <property type="match status" value="1"/>
</dbReference>
<dbReference type="PANTHER" id="PTHR23117">
    <property type="entry name" value="GUANYLATE KINASE-RELATED"/>
    <property type="match status" value="1"/>
</dbReference>
<dbReference type="Pfam" id="PF00625">
    <property type="entry name" value="Guanylate_kin"/>
    <property type="match status" value="1"/>
</dbReference>
<dbReference type="SMART" id="SM00072">
    <property type="entry name" value="GuKc"/>
    <property type="match status" value="1"/>
</dbReference>
<dbReference type="SUPFAM" id="SSF52540">
    <property type="entry name" value="P-loop containing nucleoside triphosphate hydrolases"/>
    <property type="match status" value="1"/>
</dbReference>
<dbReference type="PROSITE" id="PS00856">
    <property type="entry name" value="GUANYLATE_KINASE_1"/>
    <property type="match status" value="1"/>
</dbReference>
<dbReference type="PROSITE" id="PS50052">
    <property type="entry name" value="GUANYLATE_KINASE_2"/>
    <property type="match status" value="1"/>
</dbReference>
<comment type="function">
    <text evidence="1">Essential for recycling GMP and indirectly, cGMP.</text>
</comment>
<comment type="catalytic activity">
    <reaction evidence="1">
        <text>GMP + ATP = GDP + ADP</text>
        <dbReference type="Rhea" id="RHEA:20780"/>
        <dbReference type="ChEBI" id="CHEBI:30616"/>
        <dbReference type="ChEBI" id="CHEBI:58115"/>
        <dbReference type="ChEBI" id="CHEBI:58189"/>
        <dbReference type="ChEBI" id="CHEBI:456216"/>
        <dbReference type="EC" id="2.7.4.8"/>
    </reaction>
</comment>
<comment type="subcellular location">
    <subcellularLocation>
        <location evidence="1">Cytoplasm</location>
    </subcellularLocation>
</comment>
<comment type="similarity">
    <text evidence="1">Belongs to the guanylate kinase family.</text>
</comment>
<comment type="sequence caution" evidence="2">
    <conflict type="erroneous initiation">
        <sequence resource="EMBL-CDS" id="BAB88664"/>
    </conflict>
</comment>
<comment type="sequence caution" evidence="2">
    <conflict type="erroneous initiation">
        <sequence resource="EMBL-CDS" id="BAB98999"/>
    </conflict>
</comment>
<feature type="chain" id="PRO_0000170529" description="Guanylate kinase">
    <location>
        <begin position="1"/>
        <end position="190"/>
    </location>
</feature>
<feature type="domain" description="Guanylate kinase-like" evidence="1">
    <location>
        <begin position="8"/>
        <end position="188"/>
    </location>
</feature>
<feature type="binding site" evidence="1">
    <location>
        <begin position="15"/>
        <end position="22"/>
    </location>
    <ligand>
        <name>ATP</name>
        <dbReference type="ChEBI" id="CHEBI:30616"/>
    </ligand>
</feature>
<organism>
    <name type="scientific">Corynebacterium glutamicum (strain ATCC 13032 / DSM 20300 / JCM 1318 / BCRC 11384 / CCUG 27702 / LMG 3730 / NBRC 12168 / NCIMB 10025 / NRRL B-2784 / 534)</name>
    <dbReference type="NCBI Taxonomy" id="196627"/>
    <lineage>
        <taxon>Bacteria</taxon>
        <taxon>Bacillati</taxon>
        <taxon>Actinomycetota</taxon>
        <taxon>Actinomycetes</taxon>
        <taxon>Mycobacteriales</taxon>
        <taxon>Corynebacteriaceae</taxon>
        <taxon>Corynebacterium</taxon>
    </lineage>
</organism>
<protein>
    <recommendedName>
        <fullName evidence="1">Guanylate kinase</fullName>
        <ecNumber evidence="1">2.7.4.8</ecNumber>
    </recommendedName>
    <alternativeName>
        <fullName evidence="1">GMP kinase</fullName>
    </alternativeName>
</protein>
<reference key="1">
    <citation type="submission" date="2002-04" db="EMBL/GenBank/DDBJ databases">
        <title>Drp113 of Corynebacterim glutamicum.</title>
        <authorList>
            <person name="Hirano S."/>
            <person name="Kimura E."/>
            <person name="Kawahara Y."/>
            <person name="Sugimoto S."/>
        </authorList>
    </citation>
    <scope>NUCLEOTIDE SEQUENCE [GENOMIC DNA]</scope>
</reference>
<reference key="2">
    <citation type="journal article" date="2003" name="Appl. Microbiol. Biotechnol.">
        <title>The Corynebacterium glutamicum genome: features and impacts on biotechnological processes.</title>
        <authorList>
            <person name="Ikeda M."/>
            <person name="Nakagawa S."/>
        </authorList>
    </citation>
    <scope>NUCLEOTIDE SEQUENCE [LARGE SCALE GENOMIC DNA]</scope>
    <source>
        <strain>ATCC 13032 / DSM 20300 / JCM 1318 / BCRC 11384 / CCUG 27702 / LMG 3730 / NBRC 12168 / NCIMB 10025 / NRRL B-2784 / 534</strain>
    </source>
</reference>
<reference key="3">
    <citation type="journal article" date="2003" name="J. Biotechnol.">
        <title>The complete Corynebacterium glutamicum ATCC 13032 genome sequence and its impact on the production of L-aspartate-derived amino acids and vitamins.</title>
        <authorList>
            <person name="Kalinowski J."/>
            <person name="Bathe B."/>
            <person name="Bartels D."/>
            <person name="Bischoff N."/>
            <person name="Bott M."/>
            <person name="Burkovski A."/>
            <person name="Dusch N."/>
            <person name="Eggeling L."/>
            <person name="Eikmanns B.J."/>
            <person name="Gaigalat L."/>
            <person name="Goesmann A."/>
            <person name="Hartmann M."/>
            <person name="Huthmacher K."/>
            <person name="Kraemer R."/>
            <person name="Linke B."/>
            <person name="McHardy A.C."/>
            <person name="Meyer F."/>
            <person name="Moeckel B."/>
            <person name="Pfefferle W."/>
            <person name="Puehler A."/>
            <person name="Rey D.A."/>
            <person name="Rueckert C."/>
            <person name="Rupp O."/>
            <person name="Sahm H."/>
            <person name="Wendisch V.F."/>
            <person name="Wiegraebe I."/>
            <person name="Tauch A."/>
        </authorList>
    </citation>
    <scope>NUCLEOTIDE SEQUENCE [LARGE SCALE GENOMIC DNA]</scope>
    <source>
        <strain>ATCC 13032 / DSM 20300 / JCM 1318 / BCRC 11384 / CCUG 27702 / LMG 3730 / NBRC 12168 / NCIMB 10025 / NRRL B-2784 / 534</strain>
    </source>
</reference>
<gene>
    <name evidence="1" type="primary">gmk</name>
    <name type="synonym">drp113</name>
    <name type="ordered locus">Cgl1606</name>
    <name type="ordered locus">cg1810</name>
</gene>
<evidence type="ECO:0000255" key="1">
    <source>
        <dbReference type="HAMAP-Rule" id="MF_00328"/>
    </source>
</evidence>
<evidence type="ECO:0000305" key="2"/>
<proteinExistence type="inferred from homology"/>
<accession>Q8NQ42</accession>
<accession>Q8RQN8</accession>